<feature type="chain" id="PRO_0000288397" description="Proline--tRNA ligase">
    <location>
        <begin position="1"/>
        <end position="442"/>
    </location>
</feature>
<organism>
    <name type="scientific">Chelativorans sp. (strain BNC1)</name>
    <dbReference type="NCBI Taxonomy" id="266779"/>
    <lineage>
        <taxon>Bacteria</taxon>
        <taxon>Pseudomonadati</taxon>
        <taxon>Pseudomonadota</taxon>
        <taxon>Alphaproteobacteria</taxon>
        <taxon>Hyphomicrobiales</taxon>
        <taxon>Phyllobacteriaceae</taxon>
        <taxon>Chelativorans</taxon>
    </lineage>
</organism>
<gene>
    <name evidence="1" type="primary">proS</name>
    <name type="ordered locus">Meso_1040</name>
</gene>
<proteinExistence type="inferred from homology"/>
<reference key="1">
    <citation type="submission" date="2006-06" db="EMBL/GenBank/DDBJ databases">
        <title>Complete sequence of chromosome of Mesorhizobium sp. BNC1.</title>
        <authorList>
            <consortium name="US DOE Joint Genome Institute"/>
            <person name="Copeland A."/>
            <person name="Lucas S."/>
            <person name="Lapidus A."/>
            <person name="Barry K."/>
            <person name="Detter J.C."/>
            <person name="Glavina del Rio T."/>
            <person name="Hammon N."/>
            <person name="Israni S."/>
            <person name="Dalin E."/>
            <person name="Tice H."/>
            <person name="Pitluck S."/>
            <person name="Chertkov O."/>
            <person name="Brettin T."/>
            <person name="Bruce D."/>
            <person name="Han C."/>
            <person name="Tapia R."/>
            <person name="Gilna P."/>
            <person name="Schmutz J."/>
            <person name="Larimer F."/>
            <person name="Land M."/>
            <person name="Hauser L."/>
            <person name="Kyrpides N."/>
            <person name="Mikhailova N."/>
            <person name="Richardson P."/>
        </authorList>
    </citation>
    <scope>NUCLEOTIDE SEQUENCE [LARGE SCALE GENOMIC DNA]</scope>
    <source>
        <strain>BNC1</strain>
    </source>
</reference>
<sequence length="442" mass="49466">MRVSRYFLPILKETPREAEIVSHRLMLRSGMIRQQGAGSFSWLPLGKRVLDKVCQIVREEQDRAGAQEILMPTIQSADLWIESGRYNDYGKEMLRIRDRQDRAMLYGPTNEEMVTDIFRAYVKSYKDLPLNLYHIQWKFRDEVRPRFGVMRSREFLMKDAYSFDLDYEGAKAAYNRMFVAYLRTFARMGLKAIPMRADTGPIGGDLSHEFIILASTGESEVFCNKDFLDLPVPPADVDFTNDAEIGGVVSEWTTPYAATDEMHDEAAWAEVPAEKQLAARGIEVGHIFHFGTKYSKPMNAKVTGPDGQEHFVSMGSYGIGPTRLTAAIIEASHDDGGIIWPESVAPFDVALINMKVGDAECDRVCEELYAGMTAAGREVLYDDTDQRAGAKFATADLIGLPWQVIVGPRGIAAGEVEVKNRATGERENLPISAVPGRFGARR</sequence>
<dbReference type="EC" id="6.1.1.15" evidence="1"/>
<dbReference type="EMBL" id="CP000390">
    <property type="protein sequence ID" value="ABG62437.1"/>
    <property type="molecule type" value="Genomic_DNA"/>
</dbReference>
<dbReference type="SMR" id="Q11JI8"/>
<dbReference type="STRING" id="266779.Meso_1040"/>
<dbReference type="KEGG" id="mes:Meso_1040"/>
<dbReference type="eggNOG" id="COG0442">
    <property type="taxonomic scope" value="Bacteria"/>
</dbReference>
<dbReference type="HOGENOM" id="CLU_016739_4_2_5"/>
<dbReference type="OrthoDB" id="9809052at2"/>
<dbReference type="GO" id="GO:0005829">
    <property type="term" value="C:cytosol"/>
    <property type="evidence" value="ECO:0007669"/>
    <property type="project" value="TreeGrafter"/>
</dbReference>
<dbReference type="GO" id="GO:0005524">
    <property type="term" value="F:ATP binding"/>
    <property type="evidence" value="ECO:0007669"/>
    <property type="project" value="UniProtKB-UniRule"/>
</dbReference>
<dbReference type="GO" id="GO:0004827">
    <property type="term" value="F:proline-tRNA ligase activity"/>
    <property type="evidence" value="ECO:0007669"/>
    <property type="project" value="UniProtKB-UniRule"/>
</dbReference>
<dbReference type="GO" id="GO:0006433">
    <property type="term" value="P:prolyl-tRNA aminoacylation"/>
    <property type="evidence" value="ECO:0007669"/>
    <property type="project" value="UniProtKB-UniRule"/>
</dbReference>
<dbReference type="CDD" id="cd00861">
    <property type="entry name" value="ProRS_anticodon_short"/>
    <property type="match status" value="1"/>
</dbReference>
<dbReference type="CDD" id="cd00779">
    <property type="entry name" value="ProRS_core_prok"/>
    <property type="match status" value="1"/>
</dbReference>
<dbReference type="FunFam" id="3.30.930.10:FF:000042">
    <property type="entry name" value="probable proline--tRNA ligase, mitochondrial"/>
    <property type="match status" value="1"/>
</dbReference>
<dbReference type="FunFam" id="3.40.50.800:FF:000032">
    <property type="entry name" value="Proline--tRNA ligase"/>
    <property type="match status" value="1"/>
</dbReference>
<dbReference type="Gene3D" id="3.40.50.800">
    <property type="entry name" value="Anticodon-binding domain"/>
    <property type="match status" value="1"/>
</dbReference>
<dbReference type="Gene3D" id="3.30.930.10">
    <property type="entry name" value="Bira Bifunctional Protein, Domain 2"/>
    <property type="match status" value="1"/>
</dbReference>
<dbReference type="HAMAP" id="MF_01570">
    <property type="entry name" value="Pro_tRNA_synth_type2"/>
    <property type="match status" value="1"/>
</dbReference>
<dbReference type="InterPro" id="IPR002314">
    <property type="entry name" value="aa-tRNA-synt_IIb"/>
</dbReference>
<dbReference type="InterPro" id="IPR006195">
    <property type="entry name" value="aa-tRNA-synth_II"/>
</dbReference>
<dbReference type="InterPro" id="IPR045864">
    <property type="entry name" value="aa-tRNA-synth_II/BPL/LPL"/>
</dbReference>
<dbReference type="InterPro" id="IPR004154">
    <property type="entry name" value="Anticodon-bd"/>
</dbReference>
<dbReference type="InterPro" id="IPR036621">
    <property type="entry name" value="Anticodon-bd_dom_sf"/>
</dbReference>
<dbReference type="InterPro" id="IPR002316">
    <property type="entry name" value="Pro-tRNA-ligase_IIa"/>
</dbReference>
<dbReference type="InterPro" id="IPR004500">
    <property type="entry name" value="Pro-tRNA-synth_IIa_bac-type"/>
</dbReference>
<dbReference type="InterPro" id="IPR050062">
    <property type="entry name" value="Pro-tRNA_synthetase"/>
</dbReference>
<dbReference type="InterPro" id="IPR023716">
    <property type="entry name" value="Prolyl-tRNA_ligase_IIa_type2"/>
</dbReference>
<dbReference type="InterPro" id="IPR044140">
    <property type="entry name" value="ProRS_anticodon_short"/>
</dbReference>
<dbReference type="InterPro" id="IPR033730">
    <property type="entry name" value="ProRS_core_prok"/>
</dbReference>
<dbReference type="NCBIfam" id="NF008979">
    <property type="entry name" value="PRK12325.1"/>
    <property type="match status" value="1"/>
</dbReference>
<dbReference type="NCBIfam" id="TIGR00409">
    <property type="entry name" value="proS_fam_II"/>
    <property type="match status" value="1"/>
</dbReference>
<dbReference type="PANTHER" id="PTHR42753">
    <property type="entry name" value="MITOCHONDRIAL RIBOSOME PROTEIN L39/PROLYL-TRNA LIGASE FAMILY MEMBER"/>
    <property type="match status" value="1"/>
</dbReference>
<dbReference type="PANTHER" id="PTHR42753:SF2">
    <property type="entry name" value="PROLINE--TRNA LIGASE"/>
    <property type="match status" value="1"/>
</dbReference>
<dbReference type="Pfam" id="PF03129">
    <property type="entry name" value="HGTP_anticodon"/>
    <property type="match status" value="1"/>
</dbReference>
<dbReference type="Pfam" id="PF00587">
    <property type="entry name" value="tRNA-synt_2b"/>
    <property type="match status" value="1"/>
</dbReference>
<dbReference type="PRINTS" id="PR01046">
    <property type="entry name" value="TRNASYNTHPRO"/>
</dbReference>
<dbReference type="SUPFAM" id="SSF52954">
    <property type="entry name" value="Class II aaRS ABD-related"/>
    <property type="match status" value="1"/>
</dbReference>
<dbReference type="SUPFAM" id="SSF55681">
    <property type="entry name" value="Class II aaRS and biotin synthetases"/>
    <property type="match status" value="1"/>
</dbReference>
<dbReference type="PROSITE" id="PS50862">
    <property type="entry name" value="AA_TRNA_LIGASE_II"/>
    <property type="match status" value="1"/>
</dbReference>
<accession>Q11JI8</accession>
<comment type="function">
    <text evidence="1">Catalyzes the attachment of proline to tRNA(Pro) in a two-step reaction: proline is first activated by ATP to form Pro-AMP and then transferred to the acceptor end of tRNA(Pro).</text>
</comment>
<comment type="catalytic activity">
    <reaction evidence="1">
        <text>tRNA(Pro) + L-proline + ATP = L-prolyl-tRNA(Pro) + AMP + diphosphate</text>
        <dbReference type="Rhea" id="RHEA:14305"/>
        <dbReference type="Rhea" id="RHEA-COMP:9700"/>
        <dbReference type="Rhea" id="RHEA-COMP:9702"/>
        <dbReference type="ChEBI" id="CHEBI:30616"/>
        <dbReference type="ChEBI" id="CHEBI:33019"/>
        <dbReference type="ChEBI" id="CHEBI:60039"/>
        <dbReference type="ChEBI" id="CHEBI:78442"/>
        <dbReference type="ChEBI" id="CHEBI:78532"/>
        <dbReference type="ChEBI" id="CHEBI:456215"/>
        <dbReference type="EC" id="6.1.1.15"/>
    </reaction>
</comment>
<comment type="subunit">
    <text evidence="1">Homodimer.</text>
</comment>
<comment type="subcellular location">
    <subcellularLocation>
        <location evidence="1">Cytoplasm</location>
    </subcellularLocation>
</comment>
<comment type="similarity">
    <text evidence="1">Belongs to the class-II aminoacyl-tRNA synthetase family. ProS type 2 subfamily.</text>
</comment>
<evidence type="ECO:0000255" key="1">
    <source>
        <dbReference type="HAMAP-Rule" id="MF_01570"/>
    </source>
</evidence>
<name>SYP_CHESB</name>
<keyword id="KW-0030">Aminoacyl-tRNA synthetase</keyword>
<keyword id="KW-0067">ATP-binding</keyword>
<keyword id="KW-0963">Cytoplasm</keyword>
<keyword id="KW-0436">Ligase</keyword>
<keyword id="KW-0547">Nucleotide-binding</keyword>
<keyword id="KW-0648">Protein biosynthesis</keyword>
<protein>
    <recommendedName>
        <fullName evidence="1">Proline--tRNA ligase</fullName>
        <ecNumber evidence="1">6.1.1.15</ecNumber>
    </recommendedName>
    <alternativeName>
        <fullName evidence="1">Prolyl-tRNA synthetase</fullName>
        <shortName evidence="1">ProRS</shortName>
    </alternativeName>
</protein>